<proteinExistence type="inferred from homology"/>
<accession>A5TZK6</accession>
<dbReference type="EC" id="4.1.2.4" evidence="1"/>
<dbReference type="EMBL" id="CP000611">
    <property type="protein sequence ID" value="ABQ72206.1"/>
    <property type="molecule type" value="Genomic_DNA"/>
</dbReference>
<dbReference type="RefSeq" id="WP_003402347.1">
    <property type="nucleotide sequence ID" value="NZ_CP016972.1"/>
</dbReference>
<dbReference type="SMR" id="A5TZK6"/>
<dbReference type="KEGG" id="mra:MRA_0485"/>
<dbReference type="eggNOG" id="COG0274">
    <property type="taxonomic scope" value="Bacteria"/>
</dbReference>
<dbReference type="HOGENOM" id="CLU_053595_0_0_11"/>
<dbReference type="UniPathway" id="UPA00002">
    <property type="reaction ID" value="UER00468"/>
</dbReference>
<dbReference type="Proteomes" id="UP000001988">
    <property type="component" value="Chromosome"/>
</dbReference>
<dbReference type="GO" id="GO:0005737">
    <property type="term" value="C:cytoplasm"/>
    <property type="evidence" value="ECO:0007669"/>
    <property type="project" value="UniProtKB-SubCell"/>
</dbReference>
<dbReference type="GO" id="GO:0004139">
    <property type="term" value="F:deoxyribose-phosphate aldolase activity"/>
    <property type="evidence" value="ECO:0007669"/>
    <property type="project" value="UniProtKB-UniRule"/>
</dbReference>
<dbReference type="GO" id="GO:0006018">
    <property type="term" value="P:2-deoxyribose 1-phosphate catabolic process"/>
    <property type="evidence" value="ECO:0007669"/>
    <property type="project" value="UniProtKB-UniRule"/>
</dbReference>
<dbReference type="GO" id="GO:0016052">
    <property type="term" value="P:carbohydrate catabolic process"/>
    <property type="evidence" value="ECO:0007669"/>
    <property type="project" value="TreeGrafter"/>
</dbReference>
<dbReference type="GO" id="GO:0009264">
    <property type="term" value="P:deoxyribonucleotide catabolic process"/>
    <property type="evidence" value="ECO:0007669"/>
    <property type="project" value="InterPro"/>
</dbReference>
<dbReference type="CDD" id="cd00959">
    <property type="entry name" value="DeoC"/>
    <property type="match status" value="1"/>
</dbReference>
<dbReference type="FunFam" id="3.20.20.70:FF:000044">
    <property type="entry name" value="Deoxyribose-phosphate aldolase"/>
    <property type="match status" value="1"/>
</dbReference>
<dbReference type="Gene3D" id="3.20.20.70">
    <property type="entry name" value="Aldolase class I"/>
    <property type="match status" value="1"/>
</dbReference>
<dbReference type="HAMAP" id="MF_00114">
    <property type="entry name" value="DeoC_type1"/>
    <property type="match status" value="1"/>
</dbReference>
<dbReference type="InterPro" id="IPR013785">
    <property type="entry name" value="Aldolase_TIM"/>
</dbReference>
<dbReference type="InterPro" id="IPR011343">
    <property type="entry name" value="DeoC"/>
</dbReference>
<dbReference type="InterPro" id="IPR002915">
    <property type="entry name" value="DeoC/FbaB/LacD_aldolase"/>
</dbReference>
<dbReference type="InterPro" id="IPR028581">
    <property type="entry name" value="DeoC_typeI"/>
</dbReference>
<dbReference type="NCBIfam" id="TIGR00126">
    <property type="entry name" value="deoC"/>
    <property type="match status" value="1"/>
</dbReference>
<dbReference type="PANTHER" id="PTHR10889">
    <property type="entry name" value="DEOXYRIBOSE-PHOSPHATE ALDOLASE"/>
    <property type="match status" value="1"/>
</dbReference>
<dbReference type="PANTHER" id="PTHR10889:SF1">
    <property type="entry name" value="DEOXYRIBOSE-PHOSPHATE ALDOLASE"/>
    <property type="match status" value="1"/>
</dbReference>
<dbReference type="Pfam" id="PF01791">
    <property type="entry name" value="DeoC"/>
    <property type="match status" value="1"/>
</dbReference>
<dbReference type="PIRSF" id="PIRSF001357">
    <property type="entry name" value="DeoC"/>
    <property type="match status" value="1"/>
</dbReference>
<dbReference type="SMART" id="SM01133">
    <property type="entry name" value="DeoC"/>
    <property type="match status" value="1"/>
</dbReference>
<dbReference type="SUPFAM" id="SSF51569">
    <property type="entry name" value="Aldolase"/>
    <property type="match status" value="1"/>
</dbReference>
<feature type="chain" id="PRO_1000015326" description="Deoxyribose-phosphate aldolase">
    <location>
        <begin position="1"/>
        <end position="224"/>
    </location>
</feature>
<feature type="active site" description="Proton donor/acceptor" evidence="1">
    <location>
        <position position="93"/>
    </location>
</feature>
<feature type="active site" description="Schiff-base intermediate with acetaldehyde" evidence="1">
    <location>
        <position position="159"/>
    </location>
</feature>
<feature type="active site" description="Proton donor/acceptor" evidence="1">
    <location>
        <position position="189"/>
    </location>
</feature>
<protein>
    <recommendedName>
        <fullName evidence="1">Deoxyribose-phosphate aldolase</fullName>
        <shortName evidence="1">DERA</shortName>
        <ecNumber evidence="1">4.1.2.4</ecNumber>
    </recommendedName>
    <alternativeName>
        <fullName evidence="1">2-deoxy-D-ribose 5-phosphate aldolase</fullName>
    </alternativeName>
    <alternativeName>
        <fullName evidence="1">Phosphodeoxyriboaldolase</fullName>
        <shortName evidence="1">Deoxyriboaldolase</shortName>
    </alternativeName>
</protein>
<name>DEOC_MYCTA</name>
<keyword id="KW-0963">Cytoplasm</keyword>
<keyword id="KW-0456">Lyase</keyword>
<keyword id="KW-1185">Reference proteome</keyword>
<keyword id="KW-0704">Schiff base</keyword>
<comment type="function">
    <text evidence="1">Catalyzes a reversible aldol reaction between acetaldehyde and D-glyceraldehyde 3-phosphate to generate 2-deoxy-D-ribose 5-phosphate.</text>
</comment>
<comment type="catalytic activity">
    <reaction evidence="1">
        <text>2-deoxy-D-ribose 5-phosphate = D-glyceraldehyde 3-phosphate + acetaldehyde</text>
        <dbReference type="Rhea" id="RHEA:12821"/>
        <dbReference type="ChEBI" id="CHEBI:15343"/>
        <dbReference type="ChEBI" id="CHEBI:59776"/>
        <dbReference type="ChEBI" id="CHEBI:62877"/>
        <dbReference type="EC" id="4.1.2.4"/>
    </reaction>
</comment>
<comment type="pathway">
    <text evidence="1">Carbohydrate degradation; 2-deoxy-D-ribose 1-phosphate degradation; D-glyceraldehyde 3-phosphate and acetaldehyde from 2-deoxy-alpha-D-ribose 1-phosphate: step 2/2.</text>
</comment>
<comment type="subcellular location">
    <subcellularLocation>
        <location evidence="1">Cytoplasm</location>
    </subcellularLocation>
</comment>
<comment type="similarity">
    <text evidence="1">Belongs to the DeoC/FbaB aldolase family. DeoC type 1 subfamily.</text>
</comment>
<sequence length="224" mass="22068">MLGQPTRAQLAALVDHTLLKPETTRADVAALVAEAAELGVYAVCVSPSMVPVAVQAGGVRVAAVTGFPSGKHVSSVKAHEAAAALASGASEIDMVIDIGAALCGDIDAVRSDIEAVRAAAAGAVLKVIVESAVLLGQSNAHTLVDACRAAEDAGADFVKTSTGCHPAGGATVRAVELMAETVGPRLGVKASGGIRTAADAVAMLNAGATRLGLSGTRAVLDGLS</sequence>
<evidence type="ECO:0000255" key="1">
    <source>
        <dbReference type="HAMAP-Rule" id="MF_00114"/>
    </source>
</evidence>
<gene>
    <name evidence="1" type="primary">deoC</name>
    <name type="ordered locus">MRA_0485</name>
</gene>
<organism>
    <name type="scientific">Mycobacterium tuberculosis (strain ATCC 25177 / H37Ra)</name>
    <dbReference type="NCBI Taxonomy" id="419947"/>
    <lineage>
        <taxon>Bacteria</taxon>
        <taxon>Bacillati</taxon>
        <taxon>Actinomycetota</taxon>
        <taxon>Actinomycetes</taxon>
        <taxon>Mycobacteriales</taxon>
        <taxon>Mycobacteriaceae</taxon>
        <taxon>Mycobacterium</taxon>
        <taxon>Mycobacterium tuberculosis complex</taxon>
    </lineage>
</organism>
<reference key="1">
    <citation type="journal article" date="2008" name="PLoS ONE">
        <title>Genetic basis of virulence attenuation revealed by comparative genomic analysis of Mycobacterium tuberculosis strain H37Ra versus H37Rv.</title>
        <authorList>
            <person name="Zheng H."/>
            <person name="Lu L."/>
            <person name="Wang B."/>
            <person name="Pu S."/>
            <person name="Zhang X."/>
            <person name="Zhu G."/>
            <person name="Shi W."/>
            <person name="Zhang L."/>
            <person name="Wang H."/>
            <person name="Wang S."/>
            <person name="Zhao G."/>
            <person name="Zhang Y."/>
        </authorList>
    </citation>
    <scope>NUCLEOTIDE SEQUENCE [LARGE SCALE GENOMIC DNA]</scope>
    <source>
        <strain>ATCC 25177 / H37Ra</strain>
    </source>
</reference>